<gene>
    <name evidence="4" type="primary">Gclc</name>
    <name type="synonym">GCSh</name>
    <name type="ORF">CG2259</name>
</gene>
<proteinExistence type="evidence at transcript level"/>
<reference key="1">
    <citation type="journal article" date="2000" name="FEBS Lett.">
        <title>Molecular cloning of Drosophila gamma-glutamylcysteine synthetase by functional complementation of a yeast mutant.</title>
        <authorList>
            <person name="Saunders R.D.C."/>
            <person name="McLellan L.I."/>
        </authorList>
    </citation>
    <scope>NUCLEOTIDE SEQUENCE [MRNA]</scope>
    <scope>FUNCTION</scope>
    <source>
        <tissue>Embryo</tissue>
    </source>
</reference>
<reference key="2">
    <citation type="submission" date="2000-03" db="EMBL/GenBank/DDBJ databases">
        <title>Molecular organization of the gamma-glutamylcysteine synthetase gene in Drosophila melanogaster.</title>
        <authorList>
            <person name="Orr W.C."/>
            <person name="Sohal R.S."/>
        </authorList>
    </citation>
    <scope>NUCLEOTIDE SEQUENCE [MRNA]</scope>
</reference>
<reference key="3">
    <citation type="journal article" date="2000" name="Science">
        <title>The genome sequence of Drosophila melanogaster.</title>
        <authorList>
            <person name="Adams M.D."/>
            <person name="Celniker S.E."/>
            <person name="Holt R.A."/>
            <person name="Evans C.A."/>
            <person name="Gocayne J.D."/>
            <person name="Amanatides P.G."/>
            <person name="Scherer S.E."/>
            <person name="Li P.W."/>
            <person name="Hoskins R.A."/>
            <person name="Galle R.F."/>
            <person name="George R.A."/>
            <person name="Lewis S.E."/>
            <person name="Richards S."/>
            <person name="Ashburner M."/>
            <person name="Henderson S.N."/>
            <person name="Sutton G.G."/>
            <person name="Wortman J.R."/>
            <person name="Yandell M.D."/>
            <person name="Zhang Q."/>
            <person name="Chen L.X."/>
            <person name="Brandon R.C."/>
            <person name="Rogers Y.-H.C."/>
            <person name="Blazej R.G."/>
            <person name="Champe M."/>
            <person name="Pfeiffer B.D."/>
            <person name="Wan K.H."/>
            <person name="Doyle C."/>
            <person name="Baxter E.G."/>
            <person name="Helt G."/>
            <person name="Nelson C.R."/>
            <person name="Miklos G.L.G."/>
            <person name="Abril J.F."/>
            <person name="Agbayani A."/>
            <person name="An H.-J."/>
            <person name="Andrews-Pfannkoch C."/>
            <person name="Baldwin D."/>
            <person name="Ballew R.M."/>
            <person name="Basu A."/>
            <person name="Baxendale J."/>
            <person name="Bayraktaroglu L."/>
            <person name="Beasley E.M."/>
            <person name="Beeson K.Y."/>
            <person name="Benos P.V."/>
            <person name="Berman B.P."/>
            <person name="Bhandari D."/>
            <person name="Bolshakov S."/>
            <person name="Borkova D."/>
            <person name="Botchan M.R."/>
            <person name="Bouck J."/>
            <person name="Brokstein P."/>
            <person name="Brottier P."/>
            <person name="Burtis K.C."/>
            <person name="Busam D.A."/>
            <person name="Butler H."/>
            <person name="Cadieu E."/>
            <person name="Center A."/>
            <person name="Chandra I."/>
            <person name="Cherry J.M."/>
            <person name="Cawley S."/>
            <person name="Dahlke C."/>
            <person name="Davenport L.B."/>
            <person name="Davies P."/>
            <person name="de Pablos B."/>
            <person name="Delcher A."/>
            <person name="Deng Z."/>
            <person name="Mays A.D."/>
            <person name="Dew I."/>
            <person name="Dietz S.M."/>
            <person name="Dodson K."/>
            <person name="Doup L.E."/>
            <person name="Downes M."/>
            <person name="Dugan-Rocha S."/>
            <person name="Dunkov B.C."/>
            <person name="Dunn P."/>
            <person name="Durbin K.J."/>
            <person name="Evangelista C.C."/>
            <person name="Ferraz C."/>
            <person name="Ferriera S."/>
            <person name="Fleischmann W."/>
            <person name="Fosler C."/>
            <person name="Gabrielian A.E."/>
            <person name="Garg N.S."/>
            <person name="Gelbart W.M."/>
            <person name="Glasser K."/>
            <person name="Glodek A."/>
            <person name="Gong F."/>
            <person name="Gorrell J.H."/>
            <person name="Gu Z."/>
            <person name="Guan P."/>
            <person name="Harris M."/>
            <person name="Harris N.L."/>
            <person name="Harvey D.A."/>
            <person name="Heiman T.J."/>
            <person name="Hernandez J.R."/>
            <person name="Houck J."/>
            <person name="Hostin D."/>
            <person name="Houston K.A."/>
            <person name="Howland T.J."/>
            <person name="Wei M.-H."/>
            <person name="Ibegwam C."/>
            <person name="Jalali M."/>
            <person name="Kalush F."/>
            <person name="Karpen G.H."/>
            <person name="Ke Z."/>
            <person name="Kennison J.A."/>
            <person name="Ketchum K.A."/>
            <person name="Kimmel B.E."/>
            <person name="Kodira C.D."/>
            <person name="Kraft C.L."/>
            <person name="Kravitz S."/>
            <person name="Kulp D."/>
            <person name="Lai Z."/>
            <person name="Lasko P."/>
            <person name="Lei Y."/>
            <person name="Levitsky A.A."/>
            <person name="Li J.H."/>
            <person name="Li Z."/>
            <person name="Liang Y."/>
            <person name="Lin X."/>
            <person name="Liu X."/>
            <person name="Mattei B."/>
            <person name="McIntosh T.C."/>
            <person name="McLeod M.P."/>
            <person name="McPherson D."/>
            <person name="Merkulov G."/>
            <person name="Milshina N.V."/>
            <person name="Mobarry C."/>
            <person name="Morris J."/>
            <person name="Moshrefi A."/>
            <person name="Mount S.M."/>
            <person name="Moy M."/>
            <person name="Murphy B."/>
            <person name="Murphy L."/>
            <person name="Muzny D.M."/>
            <person name="Nelson D.L."/>
            <person name="Nelson D.R."/>
            <person name="Nelson K.A."/>
            <person name="Nixon K."/>
            <person name="Nusskern D.R."/>
            <person name="Pacleb J.M."/>
            <person name="Palazzolo M."/>
            <person name="Pittman G.S."/>
            <person name="Pan S."/>
            <person name="Pollard J."/>
            <person name="Puri V."/>
            <person name="Reese M.G."/>
            <person name="Reinert K."/>
            <person name="Remington K."/>
            <person name="Saunders R.D.C."/>
            <person name="Scheeler F."/>
            <person name="Shen H."/>
            <person name="Shue B.C."/>
            <person name="Siden-Kiamos I."/>
            <person name="Simpson M."/>
            <person name="Skupski M.P."/>
            <person name="Smith T.J."/>
            <person name="Spier E."/>
            <person name="Spradling A.C."/>
            <person name="Stapleton M."/>
            <person name="Strong R."/>
            <person name="Sun E."/>
            <person name="Svirskas R."/>
            <person name="Tector C."/>
            <person name="Turner R."/>
            <person name="Venter E."/>
            <person name="Wang A.H."/>
            <person name="Wang X."/>
            <person name="Wang Z.-Y."/>
            <person name="Wassarman D.A."/>
            <person name="Weinstock G.M."/>
            <person name="Weissenbach J."/>
            <person name="Williams S.M."/>
            <person name="Woodage T."/>
            <person name="Worley K.C."/>
            <person name="Wu D."/>
            <person name="Yang S."/>
            <person name="Yao Q.A."/>
            <person name="Ye J."/>
            <person name="Yeh R.-F."/>
            <person name="Zaveri J.S."/>
            <person name="Zhan M."/>
            <person name="Zhang G."/>
            <person name="Zhao Q."/>
            <person name="Zheng L."/>
            <person name="Zheng X.H."/>
            <person name="Zhong F.N."/>
            <person name="Zhong W."/>
            <person name="Zhou X."/>
            <person name="Zhu S.C."/>
            <person name="Zhu X."/>
            <person name="Smith H.O."/>
            <person name="Gibbs R.A."/>
            <person name="Myers E.W."/>
            <person name="Rubin G.M."/>
            <person name="Venter J.C."/>
        </authorList>
    </citation>
    <scope>NUCLEOTIDE SEQUENCE [LARGE SCALE GENOMIC DNA]</scope>
    <source>
        <strain>Berkeley</strain>
    </source>
</reference>
<reference key="4">
    <citation type="journal article" date="2002" name="Genome Biol.">
        <title>Annotation of the Drosophila melanogaster euchromatic genome: a systematic review.</title>
        <authorList>
            <person name="Misra S."/>
            <person name="Crosby M.A."/>
            <person name="Mungall C.J."/>
            <person name="Matthews B.B."/>
            <person name="Campbell K.S."/>
            <person name="Hradecky P."/>
            <person name="Huang Y."/>
            <person name="Kaminker J.S."/>
            <person name="Millburn G.H."/>
            <person name="Prochnik S.E."/>
            <person name="Smith C.D."/>
            <person name="Tupy J.L."/>
            <person name="Whitfield E.J."/>
            <person name="Bayraktaroglu L."/>
            <person name="Berman B.P."/>
            <person name="Bettencourt B.R."/>
            <person name="Celniker S.E."/>
            <person name="de Grey A.D.N.J."/>
            <person name="Drysdale R.A."/>
            <person name="Harris N.L."/>
            <person name="Richter J."/>
            <person name="Russo S."/>
            <person name="Schroeder A.J."/>
            <person name="Shu S.Q."/>
            <person name="Stapleton M."/>
            <person name="Yamada C."/>
            <person name="Ashburner M."/>
            <person name="Gelbart W.M."/>
            <person name="Rubin G.M."/>
            <person name="Lewis S.E."/>
        </authorList>
    </citation>
    <scope>GENOME REANNOTATION</scope>
    <source>
        <strain>Berkeley</strain>
    </source>
</reference>
<reference key="5">
    <citation type="journal article" date="2002" name="Genome Biol.">
        <title>A Drosophila full-length cDNA resource.</title>
        <authorList>
            <person name="Stapleton M."/>
            <person name="Carlson J.W."/>
            <person name="Brokstein P."/>
            <person name="Yu C."/>
            <person name="Champe M."/>
            <person name="George R.A."/>
            <person name="Guarin H."/>
            <person name="Kronmiller B."/>
            <person name="Pacleb J.M."/>
            <person name="Park S."/>
            <person name="Wan K.H."/>
            <person name="Rubin G.M."/>
            <person name="Celniker S.E."/>
        </authorList>
    </citation>
    <scope>NUCLEOTIDE SEQUENCE [LARGE SCALE MRNA]</scope>
    <source>
        <strain>Berkeley</strain>
        <tissue>Embryo</tissue>
    </source>
</reference>
<keyword id="KW-0067">ATP-binding</keyword>
<keyword id="KW-0317">Glutathione biosynthesis</keyword>
<keyword id="KW-0436">Ligase</keyword>
<keyword id="KW-0547">Nucleotide-binding</keyword>
<keyword id="KW-1185">Reference proteome</keyword>
<accession>Q9W3K5</accession>
<accession>Q9NGQ3</accession>
<evidence type="ECO:0000250" key="1">
    <source>
        <dbReference type="UniProtKB" id="P48506"/>
    </source>
</evidence>
<evidence type="ECO:0000256" key="2">
    <source>
        <dbReference type="SAM" id="MobiDB-lite"/>
    </source>
</evidence>
<evidence type="ECO:0000305" key="3"/>
<evidence type="ECO:0000312" key="4">
    <source>
        <dbReference type="FlyBase" id="FBgn0040319"/>
    </source>
</evidence>
<name>GSH1_DROME</name>
<protein>
    <recommendedName>
        <fullName evidence="3">Glutamate--cysteine ligase</fullName>
        <ecNumber evidence="1">6.3.2.2</ecNumber>
    </recommendedName>
    <alternativeName>
        <fullName>Gamma-ECS</fullName>
        <shortName>GCS</shortName>
    </alternativeName>
    <alternativeName>
        <fullName>Gamma-glutamylcysteine synthetase</fullName>
    </alternativeName>
</protein>
<comment type="function">
    <text evidence="1">Catalyzes the ATP-dependent ligation of L-glutamate and L-cysteine and participates in the first and rate-limiting step in glutathione biosynthesis.</text>
</comment>
<comment type="catalytic activity">
    <reaction evidence="1">
        <text>L-cysteine + L-glutamate + ATP = gamma-L-glutamyl-L-cysteine + ADP + phosphate + H(+)</text>
        <dbReference type="Rhea" id="RHEA:13285"/>
        <dbReference type="ChEBI" id="CHEBI:15378"/>
        <dbReference type="ChEBI" id="CHEBI:29985"/>
        <dbReference type="ChEBI" id="CHEBI:30616"/>
        <dbReference type="ChEBI" id="CHEBI:35235"/>
        <dbReference type="ChEBI" id="CHEBI:43474"/>
        <dbReference type="ChEBI" id="CHEBI:58173"/>
        <dbReference type="ChEBI" id="CHEBI:456216"/>
        <dbReference type="EC" id="6.3.2.2"/>
    </reaction>
    <physiologicalReaction direction="left-to-right" evidence="1">
        <dbReference type="Rhea" id="RHEA:13286"/>
    </physiologicalReaction>
</comment>
<comment type="catalytic activity">
    <reaction evidence="1">
        <text>(2S)-2-aminobutanoate + L-glutamate + ATP = gamma-L-glutamyl-(2S)-2-aminobutanoate + ADP + phosphate + H(+)</text>
        <dbReference type="Rhea" id="RHEA:72067"/>
        <dbReference type="ChEBI" id="CHEBI:15378"/>
        <dbReference type="ChEBI" id="CHEBI:29985"/>
        <dbReference type="ChEBI" id="CHEBI:30616"/>
        <dbReference type="ChEBI" id="CHEBI:43474"/>
        <dbReference type="ChEBI" id="CHEBI:74359"/>
        <dbReference type="ChEBI" id="CHEBI:189406"/>
        <dbReference type="ChEBI" id="CHEBI:456216"/>
    </reaction>
</comment>
<comment type="pathway">
    <text evidence="1">Sulfur metabolism; glutathione biosynthesis; glutathione from L-cysteine and L-glutamate: step 1/2.</text>
</comment>
<comment type="similarity">
    <text evidence="3">Belongs to the glutamate--cysteine ligase type 3 family.</text>
</comment>
<dbReference type="EC" id="6.3.2.2" evidence="1"/>
<dbReference type="EMBL" id="AF244351">
    <property type="protein sequence ID" value="AAF66980.1"/>
    <property type="molecule type" value="mRNA"/>
</dbReference>
<dbReference type="EMBL" id="AE014298">
    <property type="protein sequence ID" value="AAF46321.1"/>
    <property type="molecule type" value="Genomic_DNA"/>
</dbReference>
<dbReference type="EMBL" id="AY071586">
    <property type="protein sequence ID" value="AAL49208.1"/>
    <property type="molecule type" value="mRNA"/>
</dbReference>
<dbReference type="RefSeq" id="NP_001285001.1">
    <property type="nucleotide sequence ID" value="NM_001298072.1"/>
</dbReference>
<dbReference type="RefSeq" id="NP_001285002.1">
    <property type="nucleotide sequence ID" value="NM_001298073.1"/>
</dbReference>
<dbReference type="RefSeq" id="NP_525005.2">
    <property type="nucleotide sequence ID" value="NM_080266.3"/>
</dbReference>
<dbReference type="RefSeq" id="NP_996373.1">
    <property type="nucleotide sequence ID" value="NM_206650.2"/>
</dbReference>
<dbReference type="SMR" id="Q9W3K5"/>
<dbReference type="BioGRID" id="72805">
    <property type="interactions" value="3"/>
</dbReference>
<dbReference type="FunCoup" id="Q9W3K5">
    <property type="interactions" value="1176"/>
</dbReference>
<dbReference type="IntAct" id="Q9W3K5">
    <property type="interactions" value="3"/>
</dbReference>
<dbReference type="STRING" id="7227.FBpp0309124"/>
<dbReference type="PaxDb" id="7227-FBpp0071063"/>
<dbReference type="EnsemblMetazoa" id="FBtr0071107">
    <property type="protein sequence ID" value="FBpp0071063"/>
    <property type="gene ID" value="FBgn0040319"/>
</dbReference>
<dbReference type="EnsemblMetazoa" id="FBtr0071108">
    <property type="protein sequence ID" value="FBpp0089361"/>
    <property type="gene ID" value="FBgn0040319"/>
</dbReference>
<dbReference type="EnsemblMetazoa" id="FBtr0340138">
    <property type="protein sequence ID" value="FBpp0309124"/>
    <property type="gene ID" value="FBgn0040319"/>
</dbReference>
<dbReference type="EnsemblMetazoa" id="FBtr0340139">
    <property type="protein sequence ID" value="FBpp0309125"/>
    <property type="gene ID" value="FBgn0040319"/>
</dbReference>
<dbReference type="GeneID" id="53581"/>
<dbReference type="KEGG" id="dme:Dmel_CG2259"/>
<dbReference type="AGR" id="FB:FBgn0040319"/>
<dbReference type="CTD" id="2729"/>
<dbReference type="FlyBase" id="FBgn0040319">
    <property type="gene designation" value="Gclc"/>
</dbReference>
<dbReference type="VEuPathDB" id="VectorBase:FBgn0040319"/>
<dbReference type="eggNOG" id="KOG3754">
    <property type="taxonomic scope" value="Eukaryota"/>
</dbReference>
<dbReference type="GeneTree" id="ENSGT00390000011908"/>
<dbReference type="HOGENOM" id="CLU_010467_0_0_1"/>
<dbReference type="InParanoid" id="Q9W3K5"/>
<dbReference type="OMA" id="IAHMFIR"/>
<dbReference type="OrthoDB" id="7939818at2759"/>
<dbReference type="PhylomeDB" id="Q9W3K5"/>
<dbReference type="BRENDA" id="6.3.2.2">
    <property type="organism ID" value="1994"/>
</dbReference>
<dbReference type="Reactome" id="R-DME-174403">
    <property type="pathway name" value="Glutathione synthesis and recycling"/>
</dbReference>
<dbReference type="UniPathway" id="UPA00142">
    <property type="reaction ID" value="UER00209"/>
</dbReference>
<dbReference type="BioGRID-ORCS" id="53581">
    <property type="hits" value="2 hits in 3 CRISPR screens"/>
</dbReference>
<dbReference type="GenomeRNAi" id="53581"/>
<dbReference type="PRO" id="PR:Q9W3K5"/>
<dbReference type="Proteomes" id="UP000000803">
    <property type="component" value="Chromosome X"/>
</dbReference>
<dbReference type="Bgee" id="FBgn0040319">
    <property type="expression patterns" value="Expressed in adult oenocyte (Drosophila) in dorsal vessel heart and 220 other cell types or tissues"/>
</dbReference>
<dbReference type="ExpressionAtlas" id="Q9W3K5">
    <property type="expression patterns" value="baseline and differential"/>
</dbReference>
<dbReference type="GO" id="GO:0017109">
    <property type="term" value="C:glutamate-cysteine ligase complex"/>
    <property type="evidence" value="ECO:0000353"/>
    <property type="project" value="FlyBase"/>
</dbReference>
<dbReference type="GO" id="GO:0005634">
    <property type="term" value="C:nucleus"/>
    <property type="evidence" value="ECO:0000314"/>
    <property type="project" value="FlyBase"/>
</dbReference>
<dbReference type="GO" id="GO:0048471">
    <property type="term" value="C:perinuclear region of cytoplasm"/>
    <property type="evidence" value="ECO:0000314"/>
    <property type="project" value="FlyBase"/>
</dbReference>
<dbReference type="GO" id="GO:0005524">
    <property type="term" value="F:ATP binding"/>
    <property type="evidence" value="ECO:0007669"/>
    <property type="project" value="UniProtKB-KW"/>
</dbReference>
<dbReference type="GO" id="GO:0004357">
    <property type="term" value="F:glutamate-cysteine ligase activity"/>
    <property type="evidence" value="ECO:0000314"/>
    <property type="project" value="FlyBase"/>
</dbReference>
<dbReference type="GO" id="GO:0007409">
    <property type="term" value="P:axonogenesis"/>
    <property type="evidence" value="ECO:0000315"/>
    <property type="project" value="FlyBase"/>
</dbReference>
<dbReference type="GO" id="GO:0006750">
    <property type="term" value="P:glutathione biosynthetic process"/>
    <property type="evidence" value="ECO:0000314"/>
    <property type="project" value="FlyBase"/>
</dbReference>
<dbReference type="GO" id="GO:0006749">
    <property type="term" value="P:glutathione metabolic process"/>
    <property type="evidence" value="ECO:0000314"/>
    <property type="project" value="FlyBase"/>
</dbReference>
<dbReference type="GO" id="GO:0007476">
    <property type="term" value="P:imaginal disc-derived wing morphogenesis"/>
    <property type="evidence" value="ECO:0000315"/>
    <property type="project" value="FlyBase"/>
</dbReference>
<dbReference type="GO" id="GO:0046688">
    <property type="term" value="P:response to copper ion"/>
    <property type="evidence" value="ECO:0000314"/>
    <property type="project" value="FlyBase"/>
</dbReference>
<dbReference type="FunFam" id="1.10.8.960:FF:000001">
    <property type="entry name" value="Glutamate--cysteine ligase catalytic subunit"/>
    <property type="match status" value="1"/>
</dbReference>
<dbReference type="FunFam" id="3.30.590.50:FF:000002">
    <property type="entry name" value="Glutamate--cysteine ligase catalytic subunit"/>
    <property type="match status" value="1"/>
</dbReference>
<dbReference type="FunFam" id="3.30.590.50:FF:000003">
    <property type="entry name" value="Glutamate--cysteine ligase catalytic subunit"/>
    <property type="match status" value="1"/>
</dbReference>
<dbReference type="Gene3D" id="1.10.8.960">
    <property type="match status" value="1"/>
</dbReference>
<dbReference type="Gene3D" id="3.30.590.50">
    <property type="match status" value="2"/>
</dbReference>
<dbReference type="InterPro" id="IPR004308">
    <property type="entry name" value="GCS"/>
</dbReference>
<dbReference type="InterPro" id="IPR014746">
    <property type="entry name" value="Gln_synth/guanido_kin_cat_dom"/>
</dbReference>
<dbReference type="PANTHER" id="PTHR11164">
    <property type="entry name" value="GLUTAMATE CYSTEINE LIGASE"/>
    <property type="match status" value="1"/>
</dbReference>
<dbReference type="PANTHER" id="PTHR11164:SF0">
    <property type="entry name" value="GLUTAMATE--CYSTEINE LIGASE CATALYTIC SUBUNIT"/>
    <property type="match status" value="1"/>
</dbReference>
<dbReference type="Pfam" id="PF03074">
    <property type="entry name" value="GCS"/>
    <property type="match status" value="2"/>
</dbReference>
<dbReference type="SUPFAM" id="SSF55931">
    <property type="entry name" value="Glutamine synthetase/guanido kinase"/>
    <property type="match status" value="1"/>
</dbReference>
<organism>
    <name type="scientific">Drosophila melanogaster</name>
    <name type="common">Fruit fly</name>
    <dbReference type="NCBI Taxonomy" id="7227"/>
    <lineage>
        <taxon>Eukaryota</taxon>
        <taxon>Metazoa</taxon>
        <taxon>Ecdysozoa</taxon>
        <taxon>Arthropoda</taxon>
        <taxon>Hexapoda</taxon>
        <taxon>Insecta</taxon>
        <taxon>Pterygota</taxon>
        <taxon>Neoptera</taxon>
        <taxon>Endopterygota</taxon>
        <taxon>Diptera</taxon>
        <taxon>Brachycera</taxon>
        <taxon>Muscomorpha</taxon>
        <taxon>Ephydroidea</taxon>
        <taxon>Drosophilidae</taxon>
        <taxon>Drosophila</taxon>
        <taxon>Sophophora</taxon>
    </lineage>
</organism>
<sequence length="717" mass="80746">MGLLSEGSPLSWEETKALADHVREHGVNQFINLYHRLKDRQGDILKWGDEVEYIIVKFDDEQKVARVALRAQDLLAQLNEKELADPNGVKSLWRPEYGAYMIEGTPGKPFGGLMAHFNLVEANMRYRREEVTELLAKDECVMSITNFPRLGAPNFTYPLAQPRPEDPLSSARSLYFPDEAIFPGHPRFKTLTRNIRKRRGEKVSIKLKVFKDTKTKLPVEGAPPGEPDVVLLDAMGFGMGCCCLQLTFQACNITEARRLYDQLAPLCPIMLALTAASPIYRGYLTESDCRWNVISSSVDCRTEEERGLAPLDQQKFRIAKSRYDSIDSYLSPEGAKYNDVPLTYDEKVYQRLVEGGIDHLLAQHVAHLFIRDTVSLFSEKVHQNDNEDTDHFENIQSTNWQTMRFKPPPPNSSIGWRVEFRPCEAQISDFENAAIVCFVVLLTRVILSYQLNFLTPISKVDENMQTAQKRDACRKEKFWFRKSSKTTEQRAAKAQAQAQAQAKAQAQTNGKATLNGNGLANGNGNGSENSDQEEQQPLTNGSAKMNGHGSGTTNGTNGSSNGSSNGTDSDHTDTDDEENELFQLLSINEIFNGKPNVFPGLVPLIRSYLQSMEVDTDTHCTIEQYLRFIQKRAAGELITTATWMREQVLSHPDYKQDSVVSERINYDLLKRIQGIQEGKQVEPALLGQDYHSKTKTKDFIPPALQKQLAKNGCCEEK</sequence>
<feature type="chain" id="PRO_0000192568" description="Glutamate--cysteine ligase">
    <location>
        <begin position="1"/>
        <end position="717"/>
    </location>
</feature>
<feature type="region of interest" description="Disordered" evidence="2">
    <location>
        <begin position="484"/>
        <end position="576"/>
    </location>
</feature>
<feature type="compositionally biased region" description="Low complexity" evidence="2">
    <location>
        <begin position="492"/>
        <end position="518"/>
    </location>
</feature>
<feature type="compositionally biased region" description="Low complexity" evidence="2">
    <location>
        <begin position="551"/>
        <end position="567"/>
    </location>
</feature>
<feature type="sequence conflict" description="In Ref. 2; AAF66980." evidence="3" ref="2">
    <original>H</original>
    <variation>Y</variation>
    <location>
        <position position="35"/>
    </location>
</feature>
<feature type="sequence conflict" description="In Ref. 2; AAF66980." evidence="3" ref="2">
    <original>YIIVKFDDEQKV</original>
    <variation>SLLSSSTMTAA</variation>
    <location>
        <begin position="53"/>
        <end position="64"/>
    </location>
</feature>
<feature type="sequence conflict" description="In Ref. 2." evidence="3" ref="2">
    <original>A</original>
    <variation>AQA</variation>
    <location>
        <position position="502"/>
    </location>
</feature>
<feature type="sequence conflict" description="In Ref. 2; AAF66980." evidence="3" ref="2">
    <original>S</original>
    <variation>G</variation>
    <location>
        <position position="530"/>
    </location>
</feature>
<feature type="sequence conflict" description="In Ref. 2; AAF66980." evidence="3" ref="2">
    <original>S</original>
    <variation>N</variation>
    <location>
        <position position="550"/>
    </location>
</feature>